<name>SDHD_PHOLL</name>
<sequence>MKRTEIQQLLNEYPLVKNLMELEEIFWFNPCNTTLKEGLPFVGLGADDVEDAEARLDRFASYLCKAFPETAVTHGIIESEIVAIPTMQKTLEQHYGVGITGRILLKKDSHLPISGSIKARGGIYEVLTHAEKLALQAGLLAENDDYSKLFSEELRRFFNQYSIAVGSTGNLGLSIGIASAKLGFNVSVHMSADAREWKKQKLRSHGVNVVEHELDYGVAVARGRKEAESAPNCFFIDDENSQTLFLGYSVAGGRVKAQFEQMNIVVDEDHPLFVYLPCGVGGGPGGVAFGLKLAFGDHVHCIFAEPTHSPSMLLGVYTGLHDNICVQDIGIDNITAADGLAVGRASGFVGRAMERLLDGFYTVQDQEMYNLLGLLDRDEGIRLEPSALVGMAGPARVSGNLDYLNNKNLSAEKMKQATHLVWATGGGMVPDDEMTKYLATAKI</sequence>
<evidence type="ECO:0000255" key="1">
    <source>
        <dbReference type="HAMAP-Rule" id="MF_01030"/>
    </source>
</evidence>
<reference key="1">
    <citation type="journal article" date="2003" name="Nat. Biotechnol.">
        <title>The genome sequence of the entomopathogenic bacterium Photorhabdus luminescens.</title>
        <authorList>
            <person name="Duchaud E."/>
            <person name="Rusniok C."/>
            <person name="Frangeul L."/>
            <person name="Buchrieser C."/>
            <person name="Givaudan A."/>
            <person name="Taourit S."/>
            <person name="Bocs S."/>
            <person name="Boursaux-Eude C."/>
            <person name="Chandler M."/>
            <person name="Charles J.-F."/>
            <person name="Dassa E."/>
            <person name="Derose R."/>
            <person name="Derzelle S."/>
            <person name="Freyssinet G."/>
            <person name="Gaudriault S."/>
            <person name="Medigue C."/>
            <person name="Lanois A."/>
            <person name="Powell K."/>
            <person name="Siguier P."/>
            <person name="Vincent R."/>
            <person name="Wingate V."/>
            <person name="Zouine M."/>
            <person name="Glaser P."/>
            <person name="Boemare N."/>
            <person name="Danchin A."/>
            <person name="Kunst F."/>
        </authorList>
    </citation>
    <scope>NUCLEOTIDE SEQUENCE [LARGE SCALE GENOMIC DNA]</scope>
    <source>
        <strain>DSM 15139 / CIP 105565 / TT01</strain>
    </source>
</reference>
<comment type="catalytic activity">
    <reaction evidence="1">
        <text>D-serine = pyruvate + NH4(+)</text>
        <dbReference type="Rhea" id="RHEA:13977"/>
        <dbReference type="ChEBI" id="CHEBI:15361"/>
        <dbReference type="ChEBI" id="CHEBI:28938"/>
        <dbReference type="ChEBI" id="CHEBI:35247"/>
        <dbReference type="EC" id="4.3.1.18"/>
    </reaction>
</comment>
<comment type="cofactor">
    <cofactor evidence="1">
        <name>pyridoxal 5'-phosphate</name>
        <dbReference type="ChEBI" id="CHEBI:597326"/>
    </cofactor>
</comment>
<comment type="subunit">
    <text evidence="1">Monomer.</text>
</comment>
<comment type="similarity">
    <text evidence="1">Belongs to the serine/threonine dehydratase family. DsdA subfamily.</text>
</comment>
<gene>
    <name evidence="1" type="primary">dsdA</name>
    <name type="ordered locus">plu1970</name>
</gene>
<feature type="chain" id="PRO_0000185616" description="D-serine dehydratase">
    <location>
        <begin position="1"/>
        <end position="443"/>
    </location>
</feature>
<feature type="modified residue" description="N6-(pyridoxal phosphate)lysine" evidence="1">
    <location>
        <position position="118"/>
    </location>
</feature>
<organism>
    <name type="scientific">Photorhabdus laumondii subsp. laumondii (strain DSM 15139 / CIP 105565 / TT01)</name>
    <name type="common">Photorhabdus luminescens subsp. laumondii</name>
    <dbReference type="NCBI Taxonomy" id="243265"/>
    <lineage>
        <taxon>Bacteria</taxon>
        <taxon>Pseudomonadati</taxon>
        <taxon>Pseudomonadota</taxon>
        <taxon>Gammaproteobacteria</taxon>
        <taxon>Enterobacterales</taxon>
        <taxon>Morganellaceae</taxon>
        <taxon>Photorhabdus</taxon>
    </lineage>
</organism>
<dbReference type="EC" id="4.3.1.18" evidence="1"/>
<dbReference type="EMBL" id="BX571865">
    <property type="protein sequence ID" value="CAE14263.1"/>
    <property type="molecule type" value="Genomic_DNA"/>
</dbReference>
<dbReference type="RefSeq" id="WP_011146231.1">
    <property type="nucleotide sequence ID" value="NC_005126.1"/>
</dbReference>
<dbReference type="SMR" id="Q7N5H9"/>
<dbReference type="STRING" id="243265.plu1970"/>
<dbReference type="GeneID" id="48848244"/>
<dbReference type="KEGG" id="plu:plu1970"/>
<dbReference type="eggNOG" id="COG3048">
    <property type="taxonomic scope" value="Bacteria"/>
</dbReference>
<dbReference type="HOGENOM" id="CLU_035707_0_0_6"/>
<dbReference type="OrthoDB" id="9780546at2"/>
<dbReference type="Proteomes" id="UP000002514">
    <property type="component" value="Chromosome"/>
</dbReference>
<dbReference type="GO" id="GO:0008721">
    <property type="term" value="F:D-serine ammonia-lyase activity"/>
    <property type="evidence" value="ECO:0007669"/>
    <property type="project" value="UniProtKB-EC"/>
</dbReference>
<dbReference type="GO" id="GO:0016836">
    <property type="term" value="F:hydro-lyase activity"/>
    <property type="evidence" value="ECO:0007669"/>
    <property type="project" value="UniProtKB-UniRule"/>
</dbReference>
<dbReference type="GO" id="GO:0030170">
    <property type="term" value="F:pyridoxal phosphate binding"/>
    <property type="evidence" value="ECO:0007669"/>
    <property type="project" value="InterPro"/>
</dbReference>
<dbReference type="GO" id="GO:0036088">
    <property type="term" value="P:D-serine catabolic process"/>
    <property type="evidence" value="ECO:0007669"/>
    <property type="project" value="TreeGrafter"/>
</dbReference>
<dbReference type="GO" id="GO:0009097">
    <property type="term" value="P:isoleucine biosynthetic process"/>
    <property type="evidence" value="ECO:0007669"/>
    <property type="project" value="TreeGrafter"/>
</dbReference>
<dbReference type="FunFam" id="3.40.50.1100:FF:000018">
    <property type="entry name" value="D-serine dehydratase"/>
    <property type="match status" value="1"/>
</dbReference>
<dbReference type="Gene3D" id="3.40.50.1100">
    <property type="match status" value="2"/>
</dbReference>
<dbReference type="HAMAP" id="MF_01030">
    <property type="entry name" value="D_Ser_dehydrat"/>
    <property type="match status" value="1"/>
</dbReference>
<dbReference type="InterPro" id="IPR011780">
    <property type="entry name" value="D_Ser_am_lyase"/>
</dbReference>
<dbReference type="InterPro" id="IPR050147">
    <property type="entry name" value="Ser/Thr_Dehydratase"/>
</dbReference>
<dbReference type="InterPro" id="IPR000634">
    <property type="entry name" value="Ser/Thr_deHydtase_PyrdxlP-BS"/>
</dbReference>
<dbReference type="InterPro" id="IPR001926">
    <property type="entry name" value="TrpB-like_PALP"/>
</dbReference>
<dbReference type="InterPro" id="IPR036052">
    <property type="entry name" value="TrpB-like_PALP_sf"/>
</dbReference>
<dbReference type="NCBIfam" id="TIGR02035">
    <property type="entry name" value="D_Ser_am_lyase"/>
    <property type="match status" value="1"/>
</dbReference>
<dbReference type="NCBIfam" id="NF002823">
    <property type="entry name" value="PRK02991.1"/>
    <property type="match status" value="1"/>
</dbReference>
<dbReference type="PANTHER" id="PTHR48078:SF9">
    <property type="entry name" value="D-SERINE DEHYDRATASE"/>
    <property type="match status" value="1"/>
</dbReference>
<dbReference type="PANTHER" id="PTHR48078">
    <property type="entry name" value="THREONINE DEHYDRATASE, MITOCHONDRIAL-RELATED"/>
    <property type="match status" value="1"/>
</dbReference>
<dbReference type="Pfam" id="PF00291">
    <property type="entry name" value="PALP"/>
    <property type="match status" value="1"/>
</dbReference>
<dbReference type="SUPFAM" id="SSF53686">
    <property type="entry name" value="Tryptophan synthase beta subunit-like PLP-dependent enzymes"/>
    <property type="match status" value="1"/>
</dbReference>
<dbReference type="PROSITE" id="PS00165">
    <property type="entry name" value="DEHYDRATASE_SER_THR"/>
    <property type="match status" value="1"/>
</dbReference>
<protein>
    <recommendedName>
        <fullName evidence="1">D-serine dehydratase</fullName>
        <ecNumber evidence="1">4.3.1.18</ecNumber>
    </recommendedName>
    <alternativeName>
        <fullName evidence="1">D-serine deaminase</fullName>
        <shortName evidence="1">DSD</shortName>
    </alternativeName>
</protein>
<proteinExistence type="inferred from homology"/>
<keyword id="KW-0456">Lyase</keyword>
<keyword id="KW-0663">Pyridoxal phosphate</keyword>
<keyword id="KW-1185">Reference proteome</keyword>
<accession>Q7N5H9</accession>